<comment type="catalytic activity">
    <reaction evidence="1">
        <text>2-formamido-N(1)-(5-O-phospho-beta-D-ribosyl)acetamidine + ATP = 5-amino-1-(5-phospho-beta-D-ribosyl)imidazole + ADP + phosphate + H(+)</text>
        <dbReference type="Rhea" id="RHEA:23032"/>
        <dbReference type="ChEBI" id="CHEBI:15378"/>
        <dbReference type="ChEBI" id="CHEBI:30616"/>
        <dbReference type="ChEBI" id="CHEBI:43474"/>
        <dbReference type="ChEBI" id="CHEBI:137981"/>
        <dbReference type="ChEBI" id="CHEBI:147287"/>
        <dbReference type="ChEBI" id="CHEBI:456216"/>
        <dbReference type="EC" id="6.3.3.1"/>
    </reaction>
</comment>
<comment type="pathway">
    <text evidence="1">Purine metabolism; IMP biosynthesis via de novo pathway; 5-amino-1-(5-phospho-D-ribosyl)imidazole from N(2)-formyl-N(1)-(5-phospho-D-ribosyl)glycinamide: step 2/2.</text>
</comment>
<comment type="subcellular location">
    <subcellularLocation>
        <location evidence="1">Cytoplasm</location>
    </subcellularLocation>
</comment>
<comment type="similarity">
    <text evidence="1">Belongs to the AIR synthase family.</text>
</comment>
<evidence type="ECO:0000255" key="1">
    <source>
        <dbReference type="HAMAP-Rule" id="MF_00741"/>
    </source>
</evidence>
<sequence length="357" mass="36338">MSKSGKNGLTYSDAGVDIDAGNLLVEKIKPAVRSTRRPGADGEIGGFGGLFDLKAAGFTDPILVAANDGVGTKLKIAIDAGLHDTVGIDLVAMCVNDLVVQGAEPLLFLDYYATGKLDPNQGAAIVGGIAAGCREAGCALIGGETAEMPGMYSGGDYDLAGFAVGAAERGQLLPAGDIAEGDVILGLASSGVHSNGFSLVRKIVELAGLGWDAPAPFAEGATLGAALLTPTRIYVKPLLKAIRETKALKALAHITGGGFPENIPRVLPKHLAAEIDLASITVPTVFSWLSKTGGVAQNEMLRTFNCGVGMIVVVAAENADAVAAALEAEGETVARLGRMISREEGAPGTVYKGTLGL</sequence>
<gene>
    <name evidence="1" type="primary">purM</name>
    <name type="ordered locus">Avi_1575</name>
</gene>
<accession>B9JUY3</accession>
<reference key="1">
    <citation type="journal article" date="2009" name="J. Bacteriol.">
        <title>Genome sequences of three Agrobacterium biovars help elucidate the evolution of multichromosome genomes in bacteria.</title>
        <authorList>
            <person name="Slater S.C."/>
            <person name="Goldman B.S."/>
            <person name="Goodner B."/>
            <person name="Setubal J.C."/>
            <person name="Farrand S.K."/>
            <person name="Nester E.W."/>
            <person name="Burr T.J."/>
            <person name="Banta L."/>
            <person name="Dickerman A.W."/>
            <person name="Paulsen I."/>
            <person name="Otten L."/>
            <person name="Suen G."/>
            <person name="Welch R."/>
            <person name="Almeida N.F."/>
            <person name="Arnold F."/>
            <person name="Burton O.T."/>
            <person name="Du Z."/>
            <person name="Ewing A."/>
            <person name="Godsy E."/>
            <person name="Heisel S."/>
            <person name="Houmiel K.L."/>
            <person name="Jhaveri J."/>
            <person name="Lu J."/>
            <person name="Miller N.M."/>
            <person name="Norton S."/>
            <person name="Chen Q."/>
            <person name="Phoolcharoen W."/>
            <person name="Ohlin V."/>
            <person name="Ondrusek D."/>
            <person name="Pride N."/>
            <person name="Stricklin S.L."/>
            <person name="Sun J."/>
            <person name="Wheeler C."/>
            <person name="Wilson L."/>
            <person name="Zhu H."/>
            <person name="Wood D.W."/>
        </authorList>
    </citation>
    <scope>NUCLEOTIDE SEQUENCE [LARGE SCALE GENOMIC DNA]</scope>
    <source>
        <strain>ATCC BAA-846 / DSM 112012 / S4</strain>
    </source>
</reference>
<keyword id="KW-0067">ATP-binding</keyword>
<keyword id="KW-0963">Cytoplasm</keyword>
<keyword id="KW-0436">Ligase</keyword>
<keyword id="KW-0547">Nucleotide-binding</keyword>
<keyword id="KW-0658">Purine biosynthesis</keyword>
<keyword id="KW-1185">Reference proteome</keyword>
<organism>
    <name type="scientific">Allorhizobium ampelinum (strain ATCC BAA-846 / DSM 112012 / S4)</name>
    <name type="common">Agrobacterium vitis (strain S4)</name>
    <dbReference type="NCBI Taxonomy" id="311402"/>
    <lineage>
        <taxon>Bacteria</taxon>
        <taxon>Pseudomonadati</taxon>
        <taxon>Pseudomonadota</taxon>
        <taxon>Alphaproteobacteria</taxon>
        <taxon>Hyphomicrobiales</taxon>
        <taxon>Rhizobiaceae</taxon>
        <taxon>Rhizobium/Agrobacterium group</taxon>
        <taxon>Allorhizobium</taxon>
        <taxon>Allorhizobium ampelinum</taxon>
    </lineage>
</organism>
<name>PUR5_ALLAM</name>
<dbReference type="EC" id="6.3.3.1" evidence="1"/>
<dbReference type="EMBL" id="CP000633">
    <property type="protein sequence ID" value="ACM36128.1"/>
    <property type="molecule type" value="Genomic_DNA"/>
</dbReference>
<dbReference type="RefSeq" id="WP_015915552.1">
    <property type="nucleotide sequence ID" value="NC_011989.1"/>
</dbReference>
<dbReference type="SMR" id="B9JUY3"/>
<dbReference type="STRING" id="311402.Avi_1575"/>
<dbReference type="KEGG" id="avi:Avi_1575"/>
<dbReference type="eggNOG" id="COG0150">
    <property type="taxonomic scope" value="Bacteria"/>
</dbReference>
<dbReference type="HOGENOM" id="CLU_047116_0_0_5"/>
<dbReference type="UniPathway" id="UPA00074">
    <property type="reaction ID" value="UER00129"/>
</dbReference>
<dbReference type="Proteomes" id="UP000001596">
    <property type="component" value="Chromosome 1"/>
</dbReference>
<dbReference type="GO" id="GO:0005829">
    <property type="term" value="C:cytosol"/>
    <property type="evidence" value="ECO:0007669"/>
    <property type="project" value="TreeGrafter"/>
</dbReference>
<dbReference type="GO" id="GO:0005524">
    <property type="term" value="F:ATP binding"/>
    <property type="evidence" value="ECO:0007669"/>
    <property type="project" value="UniProtKB-KW"/>
</dbReference>
<dbReference type="GO" id="GO:0004637">
    <property type="term" value="F:phosphoribosylamine-glycine ligase activity"/>
    <property type="evidence" value="ECO:0007669"/>
    <property type="project" value="TreeGrafter"/>
</dbReference>
<dbReference type="GO" id="GO:0004641">
    <property type="term" value="F:phosphoribosylformylglycinamidine cyclo-ligase activity"/>
    <property type="evidence" value="ECO:0007669"/>
    <property type="project" value="UniProtKB-UniRule"/>
</dbReference>
<dbReference type="GO" id="GO:0006189">
    <property type="term" value="P:'de novo' IMP biosynthetic process"/>
    <property type="evidence" value="ECO:0007669"/>
    <property type="project" value="UniProtKB-UniRule"/>
</dbReference>
<dbReference type="GO" id="GO:0046084">
    <property type="term" value="P:adenine biosynthetic process"/>
    <property type="evidence" value="ECO:0007669"/>
    <property type="project" value="TreeGrafter"/>
</dbReference>
<dbReference type="CDD" id="cd02196">
    <property type="entry name" value="PurM"/>
    <property type="match status" value="1"/>
</dbReference>
<dbReference type="FunFam" id="3.30.1330.10:FF:000001">
    <property type="entry name" value="Phosphoribosylformylglycinamidine cyclo-ligase"/>
    <property type="match status" value="1"/>
</dbReference>
<dbReference type="FunFam" id="3.90.650.10:FF:000007">
    <property type="entry name" value="Trifunctional purine biosynthetic protein adenosine-3"/>
    <property type="match status" value="1"/>
</dbReference>
<dbReference type="Gene3D" id="3.90.650.10">
    <property type="entry name" value="PurM-like C-terminal domain"/>
    <property type="match status" value="1"/>
</dbReference>
<dbReference type="Gene3D" id="3.30.1330.10">
    <property type="entry name" value="PurM-like, N-terminal domain"/>
    <property type="match status" value="1"/>
</dbReference>
<dbReference type="HAMAP" id="MF_00741">
    <property type="entry name" value="AIRS"/>
    <property type="match status" value="1"/>
</dbReference>
<dbReference type="InterPro" id="IPR010918">
    <property type="entry name" value="PurM-like_C_dom"/>
</dbReference>
<dbReference type="InterPro" id="IPR036676">
    <property type="entry name" value="PurM-like_C_sf"/>
</dbReference>
<dbReference type="InterPro" id="IPR016188">
    <property type="entry name" value="PurM-like_N"/>
</dbReference>
<dbReference type="InterPro" id="IPR036921">
    <property type="entry name" value="PurM-like_N_sf"/>
</dbReference>
<dbReference type="InterPro" id="IPR004733">
    <property type="entry name" value="PurM_cligase"/>
</dbReference>
<dbReference type="NCBIfam" id="TIGR00878">
    <property type="entry name" value="purM"/>
    <property type="match status" value="1"/>
</dbReference>
<dbReference type="PANTHER" id="PTHR10520:SF12">
    <property type="entry name" value="TRIFUNCTIONAL PURINE BIOSYNTHETIC PROTEIN ADENOSINE-3"/>
    <property type="match status" value="1"/>
</dbReference>
<dbReference type="PANTHER" id="PTHR10520">
    <property type="entry name" value="TRIFUNCTIONAL PURINE BIOSYNTHETIC PROTEIN ADENOSINE-3-RELATED"/>
    <property type="match status" value="1"/>
</dbReference>
<dbReference type="Pfam" id="PF00586">
    <property type="entry name" value="AIRS"/>
    <property type="match status" value="1"/>
</dbReference>
<dbReference type="Pfam" id="PF02769">
    <property type="entry name" value="AIRS_C"/>
    <property type="match status" value="1"/>
</dbReference>
<dbReference type="SUPFAM" id="SSF56042">
    <property type="entry name" value="PurM C-terminal domain-like"/>
    <property type="match status" value="1"/>
</dbReference>
<dbReference type="SUPFAM" id="SSF55326">
    <property type="entry name" value="PurM N-terminal domain-like"/>
    <property type="match status" value="1"/>
</dbReference>
<protein>
    <recommendedName>
        <fullName evidence="1">Phosphoribosylformylglycinamidine cyclo-ligase</fullName>
        <ecNumber evidence="1">6.3.3.1</ecNumber>
    </recommendedName>
    <alternativeName>
        <fullName evidence="1">AIR synthase</fullName>
    </alternativeName>
    <alternativeName>
        <fullName evidence="1">AIRS</fullName>
    </alternativeName>
    <alternativeName>
        <fullName evidence="1">Phosphoribosyl-aminoimidazole synthetase</fullName>
    </alternativeName>
</protein>
<proteinExistence type="inferred from homology"/>
<feature type="chain" id="PRO_1000148261" description="Phosphoribosylformylglycinamidine cyclo-ligase">
    <location>
        <begin position="1"/>
        <end position="357"/>
    </location>
</feature>